<name>CBR1_HUMAN</name>
<keyword id="KW-0002">3D-structure</keyword>
<keyword id="KW-0007">Acetylation</keyword>
<keyword id="KW-0025">Alternative splicing</keyword>
<keyword id="KW-0963">Cytoplasm</keyword>
<keyword id="KW-0903">Direct protein sequencing</keyword>
<keyword id="KW-0443">Lipid metabolism</keyword>
<keyword id="KW-0521">NADP</keyword>
<keyword id="KW-0560">Oxidoreductase</keyword>
<keyword id="KW-0597">Phosphoprotein</keyword>
<keyword id="KW-1267">Proteomics identification</keyword>
<keyword id="KW-1185">Reference proteome</keyword>
<proteinExistence type="evidence at protein level"/>
<dbReference type="EC" id="1.1.1.184" evidence="6 10 12"/>
<dbReference type="EC" id="1.1.1.196" evidence="3"/>
<dbReference type="EC" id="1.1.1.197" evidence="12"/>
<dbReference type="EC" id="1.1.1.71" evidence="12"/>
<dbReference type="EC" id="1.1.1.189" evidence="6"/>
<dbReference type="EMBL" id="J04056">
    <property type="protein sequence ID" value="AAA52070.1"/>
    <property type="molecule type" value="mRNA"/>
</dbReference>
<dbReference type="EMBL" id="M62420">
    <property type="protein sequence ID" value="AAA17881.1"/>
    <property type="molecule type" value="Genomic_DNA"/>
</dbReference>
<dbReference type="EMBL" id="AB003151">
    <property type="protein sequence ID" value="BAA33498.1"/>
    <property type="molecule type" value="Genomic_DNA"/>
</dbReference>
<dbReference type="EMBL" id="AP000688">
    <property type="protein sequence ID" value="BAA89424.1"/>
    <property type="molecule type" value="Genomic_DNA"/>
</dbReference>
<dbReference type="EMBL" id="AB124848">
    <property type="protein sequence ID" value="BAE45940.1"/>
    <property type="molecule type" value="mRNA"/>
</dbReference>
<dbReference type="EMBL" id="BT019843">
    <property type="protein sequence ID" value="AAV38646.1"/>
    <property type="molecule type" value="mRNA"/>
</dbReference>
<dbReference type="EMBL" id="CR541708">
    <property type="protein sequence ID" value="CAG46509.1"/>
    <property type="molecule type" value="mRNA"/>
</dbReference>
<dbReference type="EMBL" id="AK294142">
    <property type="protein sequence ID" value="BAG57468.1"/>
    <property type="molecule type" value="mRNA"/>
</dbReference>
<dbReference type="EMBL" id="AK314879">
    <property type="protein sequence ID" value="BAG37394.1"/>
    <property type="molecule type" value="mRNA"/>
</dbReference>
<dbReference type="EMBL" id="EF141836">
    <property type="protein sequence ID" value="ABK97430.1"/>
    <property type="molecule type" value="Genomic_DNA"/>
</dbReference>
<dbReference type="EMBL" id="AP001724">
    <property type="protein sequence ID" value="BAA95508.1"/>
    <property type="molecule type" value="Genomic_DNA"/>
</dbReference>
<dbReference type="EMBL" id="CH471079">
    <property type="protein sequence ID" value="EAX09754.1"/>
    <property type="molecule type" value="Genomic_DNA"/>
</dbReference>
<dbReference type="EMBL" id="CH471079">
    <property type="protein sequence ID" value="EAX09755.1"/>
    <property type="molecule type" value="Genomic_DNA"/>
</dbReference>
<dbReference type="EMBL" id="BC002511">
    <property type="protein sequence ID" value="AAH02511.1"/>
    <property type="molecule type" value="mRNA"/>
</dbReference>
<dbReference type="EMBL" id="BC015640">
    <property type="protein sequence ID" value="AAH15640.1"/>
    <property type="molecule type" value="mRNA"/>
</dbReference>
<dbReference type="CCDS" id="CCDS13641.1">
    <molecule id="P16152-1"/>
</dbReference>
<dbReference type="CCDS" id="CCDS68202.1">
    <molecule id="P16152-2"/>
</dbReference>
<dbReference type="PIR" id="A61271">
    <property type="entry name" value="RDHUCB"/>
</dbReference>
<dbReference type="RefSeq" id="NP_001273718.1">
    <molecule id="P16152-2"/>
    <property type="nucleotide sequence ID" value="NM_001286789.2"/>
</dbReference>
<dbReference type="RefSeq" id="NP_001748.1">
    <molecule id="P16152-1"/>
    <property type="nucleotide sequence ID" value="NM_001757.4"/>
</dbReference>
<dbReference type="PDB" id="1WMA">
    <property type="method" value="X-ray"/>
    <property type="resolution" value="1.24 A"/>
    <property type="chains" value="A=2-277"/>
</dbReference>
<dbReference type="PDB" id="2PFG">
    <property type="method" value="X-ray"/>
    <property type="resolution" value="1.54 A"/>
    <property type="chains" value="A=2-277"/>
</dbReference>
<dbReference type="PDB" id="3BHI">
    <property type="method" value="X-ray"/>
    <property type="resolution" value="2.27 A"/>
    <property type="chains" value="A=2-277"/>
</dbReference>
<dbReference type="PDB" id="3BHJ">
    <property type="method" value="X-ray"/>
    <property type="resolution" value="1.77 A"/>
    <property type="chains" value="A=2-277"/>
</dbReference>
<dbReference type="PDB" id="3BHM">
    <property type="method" value="X-ray"/>
    <property type="resolution" value="1.80 A"/>
    <property type="chains" value="A=2-277"/>
</dbReference>
<dbReference type="PDB" id="4Z3D">
    <property type="method" value="X-ray"/>
    <property type="resolution" value="1.80 A"/>
    <property type="chains" value="A/B/C/D=2-277"/>
</dbReference>
<dbReference type="PDBsum" id="1WMA"/>
<dbReference type="PDBsum" id="2PFG"/>
<dbReference type="PDBsum" id="3BHI"/>
<dbReference type="PDBsum" id="3BHJ"/>
<dbReference type="PDBsum" id="3BHM"/>
<dbReference type="PDBsum" id="4Z3D"/>
<dbReference type="SMR" id="P16152"/>
<dbReference type="BioGRID" id="107319">
    <property type="interactions" value="177"/>
</dbReference>
<dbReference type="DIP" id="DIP-33136N"/>
<dbReference type="FunCoup" id="P16152">
    <property type="interactions" value="434"/>
</dbReference>
<dbReference type="IntAct" id="P16152">
    <property type="interactions" value="83"/>
</dbReference>
<dbReference type="MINT" id="P16152"/>
<dbReference type="STRING" id="9606.ENSP00000290349"/>
<dbReference type="BindingDB" id="P16152"/>
<dbReference type="ChEMBL" id="CHEMBL5586"/>
<dbReference type="DrugBank" id="DB03556">
    <property type="generic name" value="2-(2-{2-[2-(2-{2-[2-(2-Ethoxy-Ethoxy)-Ethoxy]-Ethoxy}-Ethoxy)-Ethoxy]-Ethoxy}-Ethoxy)-Ethanol, Polyethyleneglycol Peg400"/>
</dbReference>
<dbReference type="DrugBank" id="DB04463">
    <property type="generic name" value="3-(4-Amino-1-Tert-Butyl-1h-Pyrazolo[3,4-D]Pyrimidin-3-Yl)Phenol"/>
</dbReference>
<dbReference type="DrugBank" id="DB00414">
    <property type="generic name" value="Acetohexamide"/>
</dbReference>
<dbReference type="DrugBank" id="DB06263">
    <property type="generic name" value="Amrubicin"/>
</dbReference>
<dbReference type="DrugBank" id="DB11672">
    <property type="generic name" value="Curcumin"/>
</dbReference>
<dbReference type="DrugBank" id="DB14635">
    <property type="generic name" value="Curcumin sulfate"/>
</dbReference>
<dbReference type="DrugBank" id="DB00694">
    <property type="generic name" value="Daunorubicin"/>
</dbReference>
<dbReference type="DrugBank" id="DB12161">
    <property type="generic name" value="Deutetrabenazine"/>
</dbReference>
<dbReference type="DrugBank" id="DB00997">
    <property type="generic name" value="Doxorubicin"/>
</dbReference>
<dbReference type="DrugBank" id="DB01039">
    <property type="generic name" value="Fenofibrate"/>
</dbReference>
<dbReference type="DrugBank" id="DB00502">
    <property type="generic name" value="Haloperidol"/>
</dbReference>
<dbReference type="DrugBank" id="DB03394">
    <property type="generic name" value="Heptaethylene glycol"/>
</dbReference>
<dbReference type="DrugBank" id="DB09212">
    <property type="generic name" value="Loxoprofen"/>
</dbReference>
<dbReference type="DrugBank" id="DB01046">
    <property type="generic name" value="Lubiprostone"/>
</dbReference>
<dbReference type="DrugBank" id="DB12206">
    <property type="generic name" value="N-6022"/>
</dbReference>
<dbReference type="DrugBank" id="DB00776">
    <property type="generic name" value="Oxcarbazepine"/>
</dbReference>
<dbReference type="DrugBank" id="DB04216">
    <property type="generic name" value="Quercetin"/>
</dbReference>
<dbReference type="DrugBank" id="DB02709">
    <property type="generic name" value="Resveratrol"/>
</dbReference>
<dbReference type="DrugBank" id="DB01698">
    <property type="generic name" value="Rutin"/>
</dbReference>
<dbReference type="DrugBank" id="DB05197">
    <property type="generic name" value="Sofalcone"/>
</dbReference>
<dbReference type="DrugBank" id="DB04844">
    <property type="generic name" value="Tetrabenazine"/>
</dbReference>
<dbReference type="DrugCentral" id="P16152"/>
<dbReference type="GuidetoPHARMACOLOGY" id="1383"/>
<dbReference type="GlyGen" id="P16152">
    <property type="glycosylation" value="2 sites, 1 N-linked glycan (1 site), 1 O-linked glycan (1 site)"/>
</dbReference>
<dbReference type="iPTMnet" id="P16152"/>
<dbReference type="MetOSite" id="P16152"/>
<dbReference type="PhosphoSitePlus" id="P16152"/>
<dbReference type="SwissPalm" id="P16152"/>
<dbReference type="BioMuta" id="CBR1"/>
<dbReference type="DMDM" id="118519"/>
<dbReference type="REPRODUCTION-2DPAGE" id="IPI00295386"/>
<dbReference type="CPTAC" id="CPTAC-329"/>
<dbReference type="CPTAC" id="CPTAC-330"/>
<dbReference type="jPOST" id="P16152"/>
<dbReference type="MassIVE" id="P16152"/>
<dbReference type="PaxDb" id="9606-ENSP00000290349"/>
<dbReference type="PeptideAtlas" id="P16152"/>
<dbReference type="PRIDE" id="P16152"/>
<dbReference type="ProteomicsDB" id="4051"/>
<dbReference type="ProteomicsDB" id="53298">
    <molecule id="P16152-1"/>
</dbReference>
<dbReference type="Pumba" id="P16152"/>
<dbReference type="TopDownProteomics" id="P16152-1">
    <molecule id="P16152-1"/>
</dbReference>
<dbReference type="Antibodypedia" id="8245">
    <property type="antibodies" value="486 antibodies from 36 providers"/>
</dbReference>
<dbReference type="DNASU" id="873"/>
<dbReference type="Ensembl" id="ENST00000290349.11">
    <molecule id="P16152-1"/>
    <property type="protein sequence ID" value="ENSP00000290349.6"/>
    <property type="gene ID" value="ENSG00000159228.13"/>
</dbReference>
<dbReference type="Ensembl" id="ENST00000530908.5">
    <molecule id="P16152-2"/>
    <property type="protein sequence ID" value="ENSP00000434613.1"/>
    <property type="gene ID" value="ENSG00000159228.13"/>
</dbReference>
<dbReference type="GeneID" id="873"/>
<dbReference type="KEGG" id="hsa:873"/>
<dbReference type="MANE-Select" id="ENST00000290349.11">
    <property type="protein sequence ID" value="ENSP00000290349.6"/>
    <property type="RefSeq nucleotide sequence ID" value="NM_001757.4"/>
    <property type="RefSeq protein sequence ID" value="NP_001748.1"/>
</dbReference>
<dbReference type="UCSC" id="uc002yvb.3">
    <molecule id="P16152-1"/>
    <property type="organism name" value="human"/>
</dbReference>
<dbReference type="AGR" id="HGNC:1548"/>
<dbReference type="CTD" id="873"/>
<dbReference type="DisGeNET" id="873"/>
<dbReference type="GeneCards" id="CBR1"/>
<dbReference type="HGNC" id="HGNC:1548">
    <property type="gene designation" value="CBR1"/>
</dbReference>
<dbReference type="HPA" id="ENSG00000159228">
    <property type="expression patterns" value="Tissue enhanced (choroid plexus, intestine)"/>
</dbReference>
<dbReference type="MIM" id="114830">
    <property type="type" value="gene"/>
</dbReference>
<dbReference type="neXtProt" id="NX_P16152"/>
<dbReference type="OpenTargets" id="ENSG00000159228"/>
<dbReference type="PharmGKB" id="PA26121"/>
<dbReference type="VEuPathDB" id="HostDB:ENSG00000159228"/>
<dbReference type="eggNOG" id="KOG1208">
    <property type="taxonomic scope" value="Eukaryota"/>
</dbReference>
<dbReference type="GeneTree" id="ENSGT00510000046499"/>
<dbReference type="HOGENOM" id="CLU_010194_9_0_1"/>
<dbReference type="InParanoid" id="P16152"/>
<dbReference type="OMA" id="GAQTPVM"/>
<dbReference type="OrthoDB" id="7289984at2759"/>
<dbReference type="PAN-GO" id="P16152">
    <property type="GO annotations" value="1 GO annotation based on evolutionary models"/>
</dbReference>
<dbReference type="PhylomeDB" id="P16152"/>
<dbReference type="TreeFam" id="TF329359"/>
<dbReference type="BioCyc" id="MetaCyc:HS08378-MONOMER"/>
<dbReference type="BRENDA" id="1.1.1.184">
    <property type="organism ID" value="2681"/>
</dbReference>
<dbReference type="PathwayCommons" id="P16152"/>
<dbReference type="Reactome" id="R-HSA-2162123">
    <property type="pathway name" value="Synthesis of Prostaglandins (PG) and Thromboxanes (TX)"/>
</dbReference>
<dbReference type="SABIO-RK" id="P16152"/>
<dbReference type="SignaLink" id="P16152"/>
<dbReference type="BioGRID-ORCS" id="873">
    <property type="hits" value="7 hits in 1165 CRISPR screens"/>
</dbReference>
<dbReference type="CD-CODE" id="FB4E32DD">
    <property type="entry name" value="Presynaptic clusters and postsynaptic densities"/>
</dbReference>
<dbReference type="ChiTaRS" id="CBR1">
    <property type="organism name" value="human"/>
</dbReference>
<dbReference type="EvolutionaryTrace" id="P16152"/>
<dbReference type="GeneWiki" id="CBR1"/>
<dbReference type="GenomeRNAi" id="873"/>
<dbReference type="Pharos" id="P16152">
    <property type="development level" value="Tchem"/>
</dbReference>
<dbReference type="PRO" id="PR:P16152"/>
<dbReference type="Proteomes" id="UP000005640">
    <property type="component" value="Chromosome 21"/>
</dbReference>
<dbReference type="RNAct" id="P16152">
    <property type="molecule type" value="protein"/>
</dbReference>
<dbReference type="Bgee" id="ENSG00000159228">
    <property type="expression patterns" value="Expressed in jejunal mucosa and 194 other cell types or tissues"/>
</dbReference>
<dbReference type="ExpressionAtlas" id="P16152">
    <property type="expression patterns" value="baseline and differential"/>
</dbReference>
<dbReference type="GO" id="GO:0005829">
    <property type="term" value="C:cytosol"/>
    <property type="evidence" value="ECO:0000304"/>
    <property type="project" value="Reactome"/>
</dbReference>
<dbReference type="GO" id="GO:0070062">
    <property type="term" value="C:extracellular exosome"/>
    <property type="evidence" value="ECO:0007005"/>
    <property type="project" value="UniProtKB"/>
</dbReference>
<dbReference type="GO" id="GO:1903561">
    <property type="term" value="C:extracellular vesicle"/>
    <property type="evidence" value="ECO:0007005"/>
    <property type="project" value="UniProtKB"/>
</dbReference>
<dbReference type="GO" id="GO:0047021">
    <property type="term" value="F:15-hydroxyprostaglandin dehydrogenase (NADP+) activity"/>
    <property type="evidence" value="ECO:0000250"/>
    <property type="project" value="UniProtKB"/>
</dbReference>
<dbReference type="GO" id="GO:0047020">
    <property type="term" value="F:15-hydroxyprostaglandin-D dehydrogenase (NADP+) activity"/>
    <property type="evidence" value="ECO:0007669"/>
    <property type="project" value="UniProtKB-EC"/>
</dbReference>
<dbReference type="GO" id="GO:0004090">
    <property type="term" value="F:carbonyl reductase (NADPH) activity"/>
    <property type="evidence" value="ECO:0000314"/>
    <property type="project" value="UniProtKB"/>
</dbReference>
<dbReference type="GO" id="GO:0016655">
    <property type="term" value="F:oxidoreductase activity, acting on NAD(P)H, quinone or similar compound as acceptor"/>
    <property type="evidence" value="ECO:0000314"/>
    <property type="project" value="UniProtKB"/>
</dbReference>
<dbReference type="GO" id="GO:0016616">
    <property type="term" value="F:oxidoreductase activity, acting on the CH-OH group of donors, NAD or NADP as acceptor"/>
    <property type="evidence" value="ECO:0000314"/>
    <property type="project" value="UniProtKB"/>
</dbReference>
<dbReference type="GO" id="GO:0050221">
    <property type="term" value="F:prostaglandin E2 9-reductase activity"/>
    <property type="evidence" value="ECO:0000269"/>
    <property type="project" value="Reactome"/>
</dbReference>
<dbReference type="GO" id="GO:0160163">
    <property type="term" value="F:S-nitrosoglutathione reductase (NADPH) activity"/>
    <property type="evidence" value="ECO:0007669"/>
    <property type="project" value="RHEA"/>
</dbReference>
<dbReference type="GO" id="GO:0030855">
    <property type="term" value="P:epithelial cell differentiation"/>
    <property type="evidence" value="ECO:0000270"/>
    <property type="project" value="UniProtKB"/>
</dbReference>
<dbReference type="GO" id="GO:0008211">
    <property type="term" value="P:glucocorticoid metabolic process"/>
    <property type="evidence" value="ECO:0000314"/>
    <property type="project" value="UniProtKB"/>
</dbReference>
<dbReference type="GO" id="GO:2000379">
    <property type="term" value="P:positive regulation of reactive oxygen species metabolic process"/>
    <property type="evidence" value="ECO:0000314"/>
    <property type="project" value="UniProtKB"/>
</dbReference>
<dbReference type="GO" id="GO:0046457">
    <property type="term" value="P:prostanoid biosynthetic process"/>
    <property type="evidence" value="ECO:0000304"/>
    <property type="project" value="Reactome"/>
</dbReference>
<dbReference type="GO" id="GO:0042373">
    <property type="term" value="P:vitamin K metabolic process"/>
    <property type="evidence" value="ECO:0000314"/>
    <property type="project" value="UniProtKB"/>
</dbReference>
<dbReference type="GO" id="GO:0006805">
    <property type="term" value="P:xenobiotic metabolic process"/>
    <property type="evidence" value="ECO:0000314"/>
    <property type="project" value="UniProtKB"/>
</dbReference>
<dbReference type="CDD" id="cd05324">
    <property type="entry name" value="carb_red_PTCR-like_SDR_c"/>
    <property type="match status" value="1"/>
</dbReference>
<dbReference type="FunFam" id="3.40.50.720:FF:000164">
    <property type="entry name" value="Carbonyl reductase [NADPH] 1"/>
    <property type="match status" value="1"/>
</dbReference>
<dbReference type="Gene3D" id="3.40.50.720">
    <property type="entry name" value="NAD(P)-binding Rossmann-like Domain"/>
    <property type="match status" value="1"/>
</dbReference>
<dbReference type="InterPro" id="IPR045313">
    <property type="entry name" value="CBR1-like"/>
</dbReference>
<dbReference type="InterPro" id="IPR036291">
    <property type="entry name" value="NAD(P)-bd_dom_sf"/>
</dbReference>
<dbReference type="InterPro" id="IPR020904">
    <property type="entry name" value="Sc_DH/Rdtase_CS"/>
</dbReference>
<dbReference type="InterPro" id="IPR002347">
    <property type="entry name" value="SDR_fam"/>
</dbReference>
<dbReference type="PANTHER" id="PTHR43963">
    <property type="entry name" value="CARBONYL REDUCTASE 1-RELATED"/>
    <property type="match status" value="1"/>
</dbReference>
<dbReference type="PANTHER" id="PTHR43963:SF2">
    <property type="entry name" value="CARBONYL REDUCTASE [NADPH] 1"/>
    <property type="match status" value="1"/>
</dbReference>
<dbReference type="Pfam" id="PF00106">
    <property type="entry name" value="adh_short"/>
    <property type="match status" value="1"/>
</dbReference>
<dbReference type="PRINTS" id="PR00081">
    <property type="entry name" value="GDHRDH"/>
</dbReference>
<dbReference type="PRINTS" id="PR00080">
    <property type="entry name" value="SDRFAMILY"/>
</dbReference>
<dbReference type="SUPFAM" id="SSF51735">
    <property type="entry name" value="NAD(P)-binding Rossmann-fold domains"/>
    <property type="match status" value="1"/>
</dbReference>
<dbReference type="PROSITE" id="PS00061">
    <property type="entry name" value="ADH_SHORT"/>
    <property type="match status" value="1"/>
</dbReference>
<organism>
    <name type="scientific">Homo sapiens</name>
    <name type="common">Human</name>
    <dbReference type="NCBI Taxonomy" id="9606"/>
    <lineage>
        <taxon>Eukaryota</taxon>
        <taxon>Metazoa</taxon>
        <taxon>Chordata</taxon>
        <taxon>Craniata</taxon>
        <taxon>Vertebrata</taxon>
        <taxon>Euteleostomi</taxon>
        <taxon>Mammalia</taxon>
        <taxon>Eutheria</taxon>
        <taxon>Euarchontoglires</taxon>
        <taxon>Primates</taxon>
        <taxon>Haplorrhini</taxon>
        <taxon>Catarrhini</taxon>
        <taxon>Hominidae</taxon>
        <taxon>Homo</taxon>
    </lineage>
</organism>
<comment type="function">
    <text evidence="3 4 6 7 8 9 10 11 12">NADPH-dependent reductase with broad substrate specificity. Catalyzes the reduction of a wide variety of carbonyl compounds including quinones, prostaglandins, menadione, plus various xenobiotics. Catalyzes the reduction of the antitumor anthracyclines doxorubicin and daunorubicin to the cardiotoxic compounds doxorubicinol and daunorubicinol (PubMed:15799708, PubMed:17344335, PubMed:17912391, PubMed:18449627, PubMed:18826943, PubMed:1921984, PubMed:7005231). Can convert prostaglandin E to prostaglandin F2-alpha (By similarity). Can bind glutathione, which explains its higher affinity for glutathione-conjugated substrates. Catalyzes the reduction of S-nitrosoglutathione (PubMed:17344335, PubMed:18826943). In addition, participates in the glucocorticoid metabolism by catalyzing the NADPH-dependent cortisol/corticosterone into 20beta-dihydrocortisol (20b-DHF) or 20beta-corticosterone (20b-DHB), which are weak agonists of NR3C1 and NR3C2 in adipose tissue (PubMed:28878267).</text>
</comment>
<comment type="catalytic activity">
    <reaction evidence="6 10 12">
        <text>a secondary alcohol + NADP(+) = a ketone + NADPH + H(+)</text>
        <dbReference type="Rhea" id="RHEA:19257"/>
        <dbReference type="ChEBI" id="CHEBI:15378"/>
        <dbReference type="ChEBI" id="CHEBI:17087"/>
        <dbReference type="ChEBI" id="CHEBI:35681"/>
        <dbReference type="ChEBI" id="CHEBI:57783"/>
        <dbReference type="ChEBI" id="CHEBI:58349"/>
        <dbReference type="EC" id="1.1.1.184"/>
    </reaction>
</comment>
<comment type="catalytic activity">
    <reaction evidence="12">
        <text>a primary alcohol + NADP(+) = an aldehyde + NADPH + H(+)</text>
        <dbReference type="Rhea" id="RHEA:15937"/>
        <dbReference type="ChEBI" id="CHEBI:15378"/>
        <dbReference type="ChEBI" id="CHEBI:15734"/>
        <dbReference type="ChEBI" id="CHEBI:17478"/>
        <dbReference type="ChEBI" id="CHEBI:57783"/>
        <dbReference type="ChEBI" id="CHEBI:58349"/>
        <dbReference type="EC" id="1.1.1.71"/>
    </reaction>
</comment>
<comment type="catalytic activity">
    <reaction evidence="6">
        <text>prostaglandin F2alpha + NADP(+) = prostaglandin E2 + NADPH + H(+)</text>
        <dbReference type="Rhea" id="RHEA:24508"/>
        <dbReference type="ChEBI" id="CHEBI:15378"/>
        <dbReference type="ChEBI" id="CHEBI:57404"/>
        <dbReference type="ChEBI" id="CHEBI:57783"/>
        <dbReference type="ChEBI" id="CHEBI:58349"/>
        <dbReference type="ChEBI" id="CHEBI:606564"/>
        <dbReference type="EC" id="1.1.1.189"/>
    </reaction>
    <physiologicalReaction direction="right-to-left" evidence="3">
        <dbReference type="Rhea" id="RHEA:24510"/>
    </physiologicalReaction>
</comment>
<comment type="catalytic activity">
    <reaction evidence="12">
        <text>prostaglandin E1 + NADP(+) = 15-oxoprostaglandin E1 + NADPH + H(+)</text>
        <dbReference type="Rhea" id="RHEA:11636"/>
        <dbReference type="ChEBI" id="CHEBI:15378"/>
        <dbReference type="ChEBI" id="CHEBI:57397"/>
        <dbReference type="ChEBI" id="CHEBI:57401"/>
        <dbReference type="ChEBI" id="CHEBI:57783"/>
        <dbReference type="ChEBI" id="CHEBI:58349"/>
        <dbReference type="EC" id="1.1.1.197"/>
    </reaction>
    <physiologicalReaction direction="left-to-right" evidence="21">
        <dbReference type="Rhea" id="RHEA:11637"/>
    </physiologicalReaction>
</comment>
<comment type="catalytic activity">
    <reaction evidence="4 6 7 8 12">
        <text>menadione + NADPH + H(+) = menadiol + NADP(+)</text>
        <dbReference type="Rhea" id="RHEA:63492"/>
        <dbReference type="ChEBI" id="CHEBI:6746"/>
        <dbReference type="ChEBI" id="CHEBI:15378"/>
        <dbReference type="ChEBI" id="CHEBI:28869"/>
        <dbReference type="ChEBI" id="CHEBI:57783"/>
        <dbReference type="ChEBI" id="CHEBI:58349"/>
    </reaction>
</comment>
<comment type="catalytic activity">
    <reaction evidence="3">
        <text>prostaglandin D2 + NADP(+) = 15-oxoprostaglandin D2 + NADPH + H(+)</text>
        <dbReference type="Rhea" id="RHEA:20744"/>
        <dbReference type="ChEBI" id="CHEBI:15378"/>
        <dbReference type="ChEBI" id="CHEBI:57406"/>
        <dbReference type="ChEBI" id="CHEBI:57408"/>
        <dbReference type="ChEBI" id="CHEBI:57783"/>
        <dbReference type="ChEBI" id="CHEBI:58349"/>
        <dbReference type="EC" id="1.1.1.196"/>
    </reaction>
    <physiologicalReaction direction="left-to-right" evidence="3">
        <dbReference type="Rhea" id="RHEA:20745"/>
    </physiologicalReaction>
</comment>
<comment type="catalytic activity">
    <reaction evidence="3">
        <text>prostaglandin E2 + NADP(+) = 15-oxoprostaglandin E2 + NADPH + H(+)</text>
        <dbReference type="Rhea" id="RHEA:63476"/>
        <dbReference type="ChEBI" id="CHEBI:15378"/>
        <dbReference type="ChEBI" id="CHEBI:57400"/>
        <dbReference type="ChEBI" id="CHEBI:57783"/>
        <dbReference type="ChEBI" id="CHEBI:58349"/>
        <dbReference type="ChEBI" id="CHEBI:606564"/>
    </reaction>
    <physiologicalReaction direction="left-to-right" evidence="3">
        <dbReference type="Rhea" id="RHEA:63477"/>
    </physiologicalReaction>
</comment>
<comment type="catalytic activity">
    <reaction evidence="3">
        <text>prostaglandin F2alpha + NADP(+) = 15-oxoprostaglandin F2alpha + NADPH + H(+)</text>
        <dbReference type="Rhea" id="RHEA:63480"/>
        <dbReference type="ChEBI" id="CHEBI:15378"/>
        <dbReference type="ChEBI" id="CHEBI:57404"/>
        <dbReference type="ChEBI" id="CHEBI:57783"/>
        <dbReference type="ChEBI" id="CHEBI:58349"/>
        <dbReference type="ChEBI" id="CHEBI:133409"/>
    </reaction>
    <physiologicalReaction direction="left-to-right" evidence="3">
        <dbReference type="Rhea" id="RHEA:63481"/>
    </physiologicalReaction>
</comment>
<comment type="catalytic activity">
    <reaction evidence="6 8 10 12">
        <text>daunorubicin + NADPH + H(+) = 13-dihydrodaunorubicin + NADP(+)</text>
        <dbReference type="Rhea" id="RHEA:63504"/>
        <dbReference type="ChEBI" id="CHEBI:15378"/>
        <dbReference type="ChEBI" id="CHEBI:57783"/>
        <dbReference type="ChEBI" id="CHEBI:58349"/>
        <dbReference type="ChEBI" id="CHEBI:64677"/>
        <dbReference type="ChEBI" id="CHEBI:75296"/>
    </reaction>
    <physiologicalReaction direction="left-to-right" evidence="18 19">
        <dbReference type="Rhea" id="RHEA:63505"/>
    </physiologicalReaction>
</comment>
<comment type="catalytic activity">
    <reaction evidence="9">
        <text>S-nitrosoglutathione + NADPH + H(+) = S-(hydroxysulfenamide)glutathione + NADP(+)</text>
        <dbReference type="Rhea" id="RHEA:63500"/>
        <dbReference type="ChEBI" id="CHEBI:15378"/>
        <dbReference type="ChEBI" id="CHEBI:57783"/>
        <dbReference type="ChEBI" id="CHEBI:58349"/>
        <dbReference type="ChEBI" id="CHEBI:145544"/>
        <dbReference type="ChEBI" id="CHEBI:229723"/>
    </reaction>
</comment>
<comment type="catalytic activity">
    <reaction evidence="11">
        <text>cortisol + NADPH + H(+) = 20beta-dihydrocortisol + NADP(+)</text>
        <dbReference type="Rhea" id="RHEA:70215"/>
        <dbReference type="ChEBI" id="CHEBI:15378"/>
        <dbReference type="ChEBI" id="CHEBI:17650"/>
        <dbReference type="ChEBI" id="CHEBI:57783"/>
        <dbReference type="ChEBI" id="CHEBI:58349"/>
        <dbReference type="ChEBI" id="CHEBI:139311"/>
    </reaction>
    <physiologicalReaction direction="left-to-right" evidence="20">
        <dbReference type="Rhea" id="RHEA:70216"/>
    </physiologicalReaction>
</comment>
<comment type="catalytic activity">
    <reaction evidence="2">
        <text>corticosterone + NADPH + H(+) = 20beta-dihydrocorticosterone + NADP(+)</text>
        <dbReference type="Rhea" id="RHEA:70219"/>
        <dbReference type="ChEBI" id="CHEBI:15378"/>
        <dbReference type="ChEBI" id="CHEBI:16827"/>
        <dbReference type="ChEBI" id="CHEBI:57783"/>
        <dbReference type="ChEBI" id="CHEBI:58349"/>
        <dbReference type="ChEBI" id="CHEBI:189050"/>
    </reaction>
    <physiologicalReaction direction="left-to-right" evidence="2">
        <dbReference type="Rhea" id="RHEA:70220"/>
    </physiologicalReaction>
</comment>
<comment type="activity regulation">
    <text evidence="6 8">Inhibited by quercetin, rutenin and its derivatives.</text>
</comment>
<comment type="biophysicochemical properties">
    <kinetics>
        <KM evidence="9">30 uM for S-nitrosoglutathione</KM>
        <KM evidence="6 9">22 uM for menadione</KM>
        <KM evidence="6 9">309 uM for prostaglandin E2</KM>
        <KM evidence="12">450 uM for prostaglandin E1</KM>
        <KM evidence="12">4 mM for phenylglyoxal</KM>
        <KM evidence="12">1.6 mM for 4-nitrobenzaldehyde</KM>
        <KM evidence="12">17 uM for ubiquinone-1</KM>
        <KM evidence="6 9">173 uM for daunorubicin</KM>
        <KM evidence="6 9">247 uM for NADPH</KM>
    </kinetics>
</comment>
<comment type="subunit">
    <text evidence="4 7 9">Monomer.</text>
</comment>
<comment type="interaction">
    <interactant intactId="EBI-351348">
        <id>P16152</id>
    </interactant>
    <interactant intactId="EBI-714504">
        <id>O75828</id>
        <label>CBR3</label>
    </interactant>
    <organismsDiffer>false</organismsDiffer>
    <experiments>4</experiments>
</comment>
<comment type="subcellular location">
    <subcellularLocation>
        <location evidence="17">Cytoplasm</location>
    </subcellularLocation>
</comment>
<comment type="alternative products">
    <event type="alternative splicing"/>
    <isoform>
        <id>P16152-1</id>
        <name>1</name>
        <sequence type="displayed"/>
    </isoform>
    <isoform>
        <id>P16152-2</id>
        <name>2</name>
        <sequence type="described" ref="VSP_054796 VSP_054797"/>
    </isoform>
</comment>
<comment type="tissue specificity">
    <text evidence="5">Expressed in kidney (at protein level).</text>
</comment>
<comment type="similarity">
    <text evidence="17">Belongs to the short-chain dehydrogenases/reductases (SDR) family.</text>
</comment>
<reference key="1">
    <citation type="journal article" date="1988" name="J. Biol. Chem.">
        <title>Human carbonyl reductase. Nucleotide sequence analysis of a cDNA and amino acid sequence of the encoded protein.</title>
        <authorList>
            <person name="Wermuth B."/>
            <person name="Bohren K.M."/>
            <person name="Heinemann G."/>
            <person name="von Wartburg J.-P."/>
            <person name="Gabbay K.H."/>
        </authorList>
    </citation>
    <scope>NUCLEOTIDE SEQUENCE [MRNA] (ISOFORM 1)</scope>
    <scope>PARTIAL PROTEIN SEQUENCE</scope>
    <source>
        <tissue>Placenta</tissue>
    </source>
</reference>
<reference key="2">
    <citation type="journal article" date="1990" name="Biochim. Biophys. Acta">
        <title>Induction of a human carbonyl reductase gene located on chromosome 21.</title>
        <authorList>
            <person name="Forrest G.L."/>
            <person name="Akman S."/>
            <person name="Krutzik S."/>
            <person name="Paxton R.J."/>
            <person name="Sparkes R.S."/>
            <person name="Doroshow J."/>
            <person name="Felsted R.L."/>
            <person name="Mohandas T."/>
            <person name="Bachur N.R."/>
        </authorList>
    </citation>
    <scope>NUCLEOTIDE SEQUENCE [MRNA] (ISOFORM 1)</scope>
    <scope>PARTIAL PROTEIN SEQUENCE</scope>
    <source>
        <tissue>Mammary gland</tissue>
    </source>
</reference>
<reference key="3">
    <citation type="journal article" date="1991" name="Mol. Pharmacol.">
        <title>Genomic sequence and expression of a cloned human carbonyl reductase gene with daunorubicin reductase activity.</title>
        <authorList>
            <person name="Forrest G.L."/>
            <person name="Akman S."/>
            <person name="Doroshow J."/>
            <person name="Rivera H."/>
            <person name="Kaplan W.D."/>
        </authorList>
    </citation>
    <scope>NUCLEOTIDE SEQUENCE [GENOMIC DNA] (ISOFORM 1)</scope>
    <scope>FUNCTION</scope>
    <scope>CATALYTIC ACTIVITY</scope>
</reference>
<reference key="4">
    <citation type="journal article" date="1998" name="Genomics">
        <title>Mapping of a novel human carbonyl reductase, CBR3, and ribosomal pseudogenes to human chromosome 21q22.2.</title>
        <authorList>
            <person name="Watanabe K."/>
            <person name="Sugawara C."/>
            <person name="Ono A."/>
            <person name="Fukuzumi Y."/>
            <person name="Itakura S."/>
            <person name="Yamazaki M."/>
            <person name="Tashiro H."/>
            <person name="Osoegawa K."/>
            <person name="Soeda E."/>
            <person name="Nomura T."/>
        </authorList>
    </citation>
    <scope>NUCLEOTIDE SEQUENCE [GENOMIC DNA] (ISOFORM 1)</scope>
</reference>
<reference key="5">
    <citation type="submission" date="2003-10" db="EMBL/GenBank/DDBJ databases">
        <title>Human fetal brain carbonyl reductases.</title>
        <authorList>
            <person name="Terada T."/>
            <person name="Mizobuchi H."/>
        </authorList>
    </citation>
    <scope>NUCLEOTIDE SEQUENCE [MRNA] (ISOFORM 1)</scope>
    <source>
        <tissue>Fetal brain</tissue>
    </source>
</reference>
<reference key="6">
    <citation type="submission" date="2004-10" db="EMBL/GenBank/DDBJ databases">
        <title>Cloning of human full-length CDSs in BD Creator(TM) system donor vector.</title>
        <authorList>
            <person name="Kalnine N."/>
            <person name="Chen X."/>
            <person name="Rolfs A."/>
            <person name="Halleck A."/>
            <person name="Hines L."/>
            <person name="Eisenstein S."/>
            <person name="Koundinya M."/>
            <person name="Raphael J."/>
            <person name="Moreira D."/>
            <person name="Kelley T."/>
            <person name="LaBaer J."/>
            <person name="Lin Y."/>
            <person name="Phelan M."/>
            <person name="Farmer A."/>
        </authorList>
    </citation>
    <scope>NUCLEOTIDE SEQUENCE [LARGE SCALE MRNA] (ISOFORM 1)</scope>
</reference>
<reference key="7">
    <citation type="submission" date="2004-06" db="EMBL/GenBank/DDBJ databases">
        <title>Cloning of human full open reading frames in Gateway(TM) system entry vector (pDONR201).</title>
        <authorList>
            <person name="Halleck A."/>
            <person name="Ebert L."/>
            <person name="Mkoundinya M."/>
            <person name="Schick M."/>
            <person name="Eisenstein S."/>
            <person name="Neubert P."/>
            <person name="Kstrang K."/>
            <person name="Schatten R."/>
            <person name="Shen B."/>
            <person name="Henze S."/>
            <person name="Mar W."/>
            <person name="Korn B."/>
            <person name="Zuo D."/>
            <person name="Hu Y."/>
            <person name="LaBaer J."/>
        </authorList>
    </citation>
    <scope>NUCLEOTIDE SEQUENCE [LARGE SCALE MRNA] (ISOFORM 1)</scope>
</reference>
<reference key="8">
    <citation type="journal article" date="2004" name="Nat. Genet.">
        <title>Complete sequencing and characterization of 21,243 full-length human cDNAs.</title>
        <authorList>
            <person name="Ota T."/>
            <person name="Suzuki Y."/>
            <person name="Nishikawa T."/>
            <person name="Otsuki T."/>
            <person name="Sugiyama T."/>
            <person name="Irie R."/>
            <person name="Wakamatsu A."/>
            <person name="Hayashi K."/>
            <person name="Sato H."/>
            <person name="Nagai K."/>
            <person name="Kimura K."/>
            <person name="Makita H."/>
            <person name="Sekine M."/>
            <person name="Obayashi M."/>
            <person name="Nishi T."/>
            <person name="Shibahara T."/>
            <person name="Tanaka T."/>
            <person name="Ishii S."/>
            <person name="Yamamoto J."/>
            <person name="Saito K."/>
            <person name="Kawai Y."/>
            <person name="Isono Y."/>
            <person name="Nakamura Y."/>
            <person name="Nagahari K."/>
            <person name="Murakami K."/>
            <person name="Yasuda T."/>
            <person name="Iwayanagi T."/>
            <person name="Wagatsuma M."/>
            <person name="Shiratori A."/>
            <person name="Sudo H."/>
            <person name="Hosoiri T."/>
            <person name="Kaku Y."/>
            <person name="Kodaira H."/>
            <person name="Kondo H."/>
            <person name="Sugawara M."/>
            <person name="Takahashi M."/>
            <person name="Kanda K."/>
            <person name="Yokoi T."/>
            <person name="Furuya T."/>
            <person name="Kikkawa E."/>
            <person name="Omura Y."/>
            <person name="Abe K."/>
            <person name="Kamihara K."/>
            <person name="Katsuta N."/>
            <person name="Sato K."/>
            <person name="Tanikawa M."/>
            <person name="Yamazaki M."/>
            <person name="Ninomiya K."/>
            <person name="Ishibashi T."/>
            <person name="Yamashita H."/>
            <person name="Murakawa K."/>
            <person name="Fujimori K."/>
            <person name="Tanai H."/>
            <person name="Kimata M."/>
            <person name="Watanabe M."/>
            <person name="Hiraoka S."/>
            <person name="Chiba Y."/>
            <person name="Ishida S."/>
            <person name="Ono Y."/>
            <person name="Takiguchi S."/>
            <person name="Watanabe S."/>
            <person name="Yosida M."/>
            <person name="Hotuta T."/>
            <person name="Kusano J."/>
            <person name="Kanehori K."/>
            <person name="Takahashi-Fujii A."/>
            <person name="Hara H."/>
            <person name="Tanase T.-O."/>
            <person name="Nomura Y."/>
            <person name="Togiya S."/>
            <person name="Komai F."/>
            <person name="Hara R."/>
            <person name="Takeuchi K."/>
            <person name="Arita M."/>
            <person name="Imose N."/>
            <person name="Musashino K."/>
            <person name="Yuuki H."/>
            <person name="Oshima A."/>
            <person name="Sasaki N."/>
            <person name="Aotsuka S."/>
            <person name="Yoshikawa Y."/>
            <person name="Matsunawa H."/>
            <person name="Ichihara T."/>
            <person name="Shiohata N."/>
            <person name="Sano S."/>
            <person name="Moriya S."/>
            <person name="Momiyama H."/>
            <person name="Satoh N."/>
            <person name="Takami S."/>
            <person name="Terashima Y."/>
            <person name="Suzuki O."/>
            <person name="Nakagawa S."/>
            <person name="Senoh A."/>
            <person name="Mizoguchi H."/>
            <person name="Goto Y."/>
            <person name="Shimizu F."/>
            <person name="Wakebe H."/>
            <person name="Hishigaki H."/>
            <person name="Watanabe T."/>
            <person name="Sugiyama A."/>
            <person name="Takemoto M."/>
            <person name="Kawakami B."/>
            <person name="Yamazaki M."/>
            <person name="Watanabe K."/>
            <person name="Kumagai A."/>
            <person name="Itakura S."/>
            <person name="Fukuzumi Y."/>
            <person name="Fujimori Y."/>
            <person name="Komiyama M."/>
            <person name="Tashiro H."/>
            <person name="Tanigami A."/>
            <person name="Fujiwara T."/>
            <person name="Ono T."/>
            <person name="Yamada K."/>
            <person name="Fujii Y."/>
            <person name="Ozaki K."/>
            <person name="Hirao M."/>
            <person name="Ohmori Y."/>
            <person name="Kawabata A."/>
            <person name="Hikiji T."/>
            <person name="Kobatake N."/>
            <person name="Inagaki H."/>
            <person name="Ikema Y."/>
            <person name="Okamoto S."/>
            <person name="Okitani R."/>
            <person name="Kawakami T."/>
            <person name="Noguchi S."/>
            <person name="Itoh T."/>
            <person name="Shigeta K."/>
            <person name="Senba T."/>
            <person name="Matsumura K."/>
            <person name="Nakajima Y."/>
            <person name="Mizuno T."/>
            <person name="Morinaga M."/>
            <person name="Sasaki M."/>
            <person name="Togashi T."/>
            <person name="Oyama M."/>
            <person name="Hata H."/>
            <person name="Watanabe M."/>
            <person name="Komatsu T."/>
            <person name="Mizushima-Sugano J."/>
            <person name="Satoh T."/>
            <person name="Shirai Y."/>
            <person name="Takahashi Y."/>
            <person name="Nakagawa K."/>
            <person name="Okumura K."/>
            <person name="Nagase T."/>
            <person name="Nomura N."/>
            <person name="Kikuchi H."/>
            <person name="Masuho Y."/>
            <person name="Yamashita R."/>
            <person name="Nakai K."/>
            <person name="Yada T."/>
            <person name="Nakamura Y."/>
            <person name="Ohara O."/>
            <person name="Isogai T."/>
            <person name="Sugano S."/>
        </authorList>
    </citation>
    <scope>NUCLEOTIDE SEQUENCE [LARGE SCALE MRNA] (ISOFORMS 1 AND 2)</scope>
    <source>
        <tissue>Hippocampus</tissue>
    </source>
</reference>
<reference key="9">
    <citation type="submission" date="2006-11" db="EMBL/GenBank/DDBJ databases">
        <authorList>
            <consortium name="SeattleSNPs variation discovery resource"/>
        </authorList>
    </citation>
    <scope>NUCLEOTIDE SEQUENCE [GENOMIC DNA] (ISOFORM 1)</scope>
    <scope>VARIANT SER-131</scope>
</reference>
<reference key="10">
    <citation type="journal article" date="2000" name="Nature">
        <title>The DNA sequence of human chromosome 21.</title>
        <authorList>
            <person name="Hattori M."/>
            <person name="Fujiyama A."/>
            <person name="Taylor T.D."/>
            <person name="Watanabe H."/>
            <person name="Yada T."/>
            <person name="Park H.-S."/>
            <person name="Toyoda A."/>
            <person name="Ishii K."/>
            <person name="Totoki Y."/>
            <person name="Choi D.-K."/>
            <person name="Groner Y."/>
            <person name="Soeda E."/>
            <person name="Ohki M."/>
            <person name="Takagi T."/>
            <person name="Sakaki Y."/>
            <person name="Taudien S."/>
            <person name="Blechschmidt K."/>
            <person name="Polley A."/>
            <person name="Menzel U."/>
            <person name="Delabar J."/>
            <person name="Kumpf K."/>
            <person name="Lehmann R."/>
            <person name="Patterson D."/>
            <person name="Reichwald K."/>
            <person name="Rump A."/>
            <person name="Schillhabel M."/>
            <person name="Schudy A."/>
            <person name="Zimmermann W."/>
            <person name="Rosenthal A."/>
            <person name="Kudoh J."/>
            <person name="Shibuya K."/>
            <person name="Kawasaki K."/>
            <person name="Asakawa S."/>
            <person name="Shintani A."/>
            <person name="Sasaki T."/>
            <person name="Nagamine K."/>
            <person name="Mitsuyama S."/>
            <person name="Antonarakis S.E."/>
            <person name="Minoshima S."/>
            <person name="Shimizu N."/>
            <person name="Nordsiek G."/>
            <person name="Hornischer K."/>
            <person name="Brandt P."/>
            <person name="Scharfe M."/>
            <person name="Schoen O."/>
            <person name="Desario A."/>
            <person name="Reichelt J."/>
            <person name="Kauer G."/>
            <person name="Bloecker H."/>
            <person name="Ramser J."/>
            <person name="Beck A."/>
            <person name="Klages S."/>
            <person name="Hennig S."/>
            <person name="Riesselmann L."/>
            <person name="Dagand E."/>
            <person name="Wehrmeyer S."/>
            <person name="Borzym K."/>
            <person name="Gardiner K."/>
            <person name="Nizetic D."/>
            <person name="Francis F."/>
            <person name="Lehrach H."/>
            <person name="Reinhardt R."/>
            <person name="Yaspo M.-L."/>
        </authorList>
    </citation>
    <scope>NUCLEOTIDE SEQUENCE [LARGE SCALE GENOMIC DNA]</scope>
</reference>
<reference key="11">
    <citation type="submission" date="2005-09" db="EMBL/GenBank/DDBJ databases">
        <authorList>
            <person name="Mural R.J."/>
            <person name="Istrail S."/>
            <person name="Sutton G.G."/>
            <person name="Florea L."/>
            <person name="Halpern A.L."/>
            <person name="Mobarry C.M."/>
            <person name="Lippert R."/>
            <person name="Walenz B."/>
            <person name="Shatkay H."/>
            <person name="Dew I."/>
            <person name="Miller J.R."/>
            <person name="Flanigan M.J."/>
            <person name="Edwards N.J."/>
            <person name="Bolanos R."/>
            <person name="Fasulo D."/>
            <person name="Halldorsson B.V."/>
            <person name="Hannenhalli S."/>
            <person name="Turner R."/>
            <person name="Yooseph S."/>
            <person name="Lu F."/>
            <person name="Nusskern D.R."/>
            <person name="Shue B.C."/>
            <person name="Zheng X.H."/>
            <person name="Zhong F."/>
            <person name="Delcher A.L."/>
            <person name="Huson D.H."/>
            <person name="Kravitz S.A."/>
            <person name="Mouchard L."/>
            <person name="Reinert K."/>
            <person name="Remington K.A."/>
            <person name="Clark A.G."/>
            <person name="Waterman M.S."/>
            <person name="Eichler E.E."/>
            <person name="Adams M.D."/>
            <person name="Hunkapiller M.W."/>
            <person name="Myers E.W."/>
            <person name="Venter J.C."/>
        </authorList>
    </citation>
    <scope>NUCLEOTIDE SEQUENCE [LARGE SCALE GENOMIC DNA]</scope>
</reference>
<reference key="12">
    <citation type="journal article" date="2004" name="Genome Res.">
        <title>The status, quality, and expansion of the NIH full-length cDNA project: the Mammalian Gene Collection (MGC).</title>
        <authorList>
            <consortium name="The MGC Project Team"/>
        </authorList>
    </citation>
    <scope>NUCLEOTIDE SEQUENCE [LARGE SCALE MRNA] (ISOFORM 1)</scope>
    <source>
        <tissue>Skin</tissue>
    </source>
</reference>
<reference key="13">
    <citation type="journal article" date="1993" name="Proc. Natl. Acad. Sci. U.S.A.">
        <title>Carboxyethyllysine in a protein: native carbonyl reductase/NADP(+)-dependent prostaglandin dehydrogenase.</title>
        <authorList>
            <person name="Krook M."/>
            <person name="Ghosh D."/>
            <person name="Stroemberg R."/>
            <person name="Carlquist M."/>
            <person name="Joernvall H."/>
        </authorList>
    </citation>
    <scope>PARTIAL PROTEIN SEQUENCE</scope>
    <scope>POST-TRANSLATIONAL MODIFICATION AT LYS-239</scope>
</reference>
<reference key="14">
    <citation type="journal article" date="1981" name="J. Biol. Chem.">
        <title>Purification and properties of an NADPH-dependent carbonyl reductase from human brain. Relationship to prostaglandin 9-ketoreductase and xenobiotic ketone reductase.</title>
        <authorList>
            <person name="Wermuth B."/>
        </authorList>
    </citation>
    <scope>CATALYTIC ACTIVITY</scope>
    <scope>FUNCTION</scope>
    <scope>BIOPHYSICOCHEMICAL PROPERTIES</scope>
</reference>
<reference key="15">
    <citation type="journal article" date="1992" name="Eur. J. Biochem.">
        <title>Purification and properties of prostaglandin 9-ketoreductase from pig and human kidney. Identity with human carbonyl reductase.</title>
        <authorList>
            <person name="Schieber A."/>
            <person name="Frank R.W."/>
            <person name="Ghisla S."/>
        </authorList>
    </citation>
    <scope>TISSUE SPECIFICITY</scope>
</reference>
<reference key="16">
    <citation type="journal article" date="2008" name="Pharm. Res.">
        <title>Inhibition of polymorphic human carbonyl reductase 1 (CBR1) by the cardioprotectant flavonoid 7-monohydroxyethyl rutoside (monoHER).</title>
        <authorList>
            <person name="Gonzalez-Covarrubias V."/>
            <person name="Kalabus J.L."/>
            <person name="Blanco J.G."/>
        </authorList>
    </citation>
    <scope>ACTIVITY REGULATION</scope>
    <scope>FUNCTION</scope>
    <scope>CATALYTIC ACTIVITY</scope>
    <scope>CHARACTERIZATION OF VARIANT ILE-88</scope>
</reference>
<reference key="17">
    <citation type="journal article" date="2009" name="Anal. Chem.">
        <title>Lys-N and trypsin cover complementary parts of the phosphoproteome in a refined SCX-based approach.</title>
        <authorList>
            <person name="Gauci S."/>
            <person name="Helbig A.O."/>
            <person name="Slijper M."/>
            <person name="Krijgsveld J."/>
            <person name="Heck A.J."/>
            <person name="Mohammed S."/>
        </authorList>
    </citation>
    <scope>ACETYLATION [LARGE SCALE ANALYSIS] AT SER-2</scope>
    <scope>CLEAVAGE OF INITIATOR METHIONINE [LARGE SCALE ANALYSIS]</scope>
    <scope>IDENTIFICATION BY MASS SPECTROMETRY [LARGE SCALE ANALYSIS]</scope>
</reference>
<reference key="18">
    <citation type="journal article" date="2011" name="BMC Syst. Biol.">
        <title>Initial characterization of the human central proteome.</title>
        <authorList>
            <person name="Burkard T.R."/>
            <person name="Planyavsky M."/>
            <person name="Kaupe I."/>
            <person name="Breitwieser F.P."/>
            <person name="Buerckstuemmer T."/>
            <person name="Bennett K.L."/>
            <person name="Superti-Furga G."/>
            <person name="Colinge J."/>
        </authorList>
    </citation>
    <scope>IDENTIFICATION BY MASS SPECTROMETRY [LARGE SCALE ANALYSIS]</scope>
</reference>
<reference key="19">
    <citation type="journal article" date="2017" name="Sci. Rep.">
        <title>Carbonyl reductase 1 catalyzes 20beta-reduction of glucocorticoids, modulating receptor activation and metabolic complications of obesity.</title>
        <authorList>
            <person name="Morgan R.A."/>
            <person name="Beck K.R."/>
            <person name="Nixon M."/>
            <person name="Homer N.Z.M."/>
            <person name="Crawford A.A."/>
            <person name="Melchers D."/>
            <person name="Houtman R."/>
            <person name="Meijer O.C."/>
            <person name="Stomby A."/>
            <person name="Anderson A.J."/>
            <person name="Upreti R."/>
            <person name="Stimson R.H."/>
            <person name="Olsson T."/>
            <person name="Michoel T."/>
            <person name="Cohain A."/>
            <person name="Ruusalepp A."/>
            <person name="Schadt E.E."/>
            <person name="Bjoerkegren J.L.M."/>
            <person name="Andrew R."/>
            <person name="Kenyon C.J."/>
            <person name="Hadoke P.W.F."/>
            <person name="Odermatt A."/>
            <person name="Keen J.A."/>
            <person name="Walker B.R."/>
        </authorList>
    </citation>
    <scope>FUNCTION</scope>
    <scope>CATALYTIC ACTIVITY</scope>
</reference>
<reference key="20">
    <citation type="journal article" date="2005" name="PLoS Biol.">
        <title>An unbiased cell morphology-based screen for new, biologically active small molecules.</title>
        <authorList>
            <person name="Tanaka M."/>
            <person name="Bateman R."/>
            <person name="Rauh D."/>
            <person name="Vaisberg E."/>
            <person name="Ramachandani S."/>
            <person name="Zhang C."/>
            <person name="Hansen K.C."/>
            <person name="Burlingame A.L."/>
            <person name="Trautman J.K."/>
            <person name="Shokat K.M."/>
            <person name="Adams C.L."/>
        </authorList>
    </citation>
    <scope>X-RAY CRYSTALLOGRAPHY (1.24 ANGSTROMS) OF 2-276 IN COMPLEX WITH THE SYNTHETIC INHIBITOR HYDROXY-PP AND NADP</scope>
    <scope>IDENTIFICATION BY MASS SPECTROMETRY</scope>
    <scope>PARTIAL PROTEIN SEQUENCE</scope>
    <scope>FUNCTION</scope>
    <scope>CATALYTIC ACTIVITY</scope>
</reference>
<reference key="21">
    <citation type="journal article" date="2007" name="Org. Biomol. Chem.">
        <title>Glutathione traps formaldehyde by formation of a bicyclo[4.4.1]undecane adduct.</title>
        <authorList>
            <person name="Bateman R."/>
            <person name="Rauh D."/>
            <person name="Shokat K.M."/>
        </authorList>
    </citation>
    <scope>X-RAY CRYSTALLOGRAPHY (1.54 ANGSTROMS) OF 2-277 IN COMPLEX WITH NADP AND FORMALDEHYDE-GLUTATHIONE ADDUCT</scope>
    <scope>FUNCTION</scope>
    <scope>CATALYTIC ACTIVITY</scope>
</reference>
<reference key="22">
    <citation type="journal article" date="2008" name="J. Biol. Chem.">
        <title>Human carbonyl reductase 1 is an S-nitrosoglutathione reductase.</title>
        <authorList>
            <person name="Bateman R.L."/>
            <person name="Rauh D."/>
            <person name="Tavshanjian B."/>
            <person name="Shokat K.M."/>
        </authorList>
    </citation>
    <scope>X-RAY CRYSTALLOGRAPHY (1.77 ANGSTROMS) OF 2-277 IN COMPLEX WITH NADP</scope>
    <scope>SUBSTRATE ANALOGS</scope>
    <scope>FUNCTION</scope>
    <scope>CATALYTIC ACTIVITY</scope>
    <scope>BIOPHYSICOCHEMICAL PROPERTIES</scope>
</reference>
<reference key="23">
    <citation type="journal article" date="2007" name="Drug Metab. Dispos.">
        <title>A functional genetic polymorphism on human carbonyl reductase 1 (CBR1 V88I) impacts on catalytic activity and NADPH binding affinity.</title>
        <authorList>
            <person name="Gonzalez-Covarrubias V."/>
            <person name="Ghosh D."/>
            <person name="Lakhman S.S."/>
            <person name="Pendyala L."/>
            <person name="Blanco J.G."/>
        </authorList>
    </citation>
    <scope>VARIANT ILE-88</scope>
    <scope>CHARACTERIZATION OF VARIANT ILE-88</scope>
    <scope>BIOPHYSICOCHEMICAL PROPERTIES</scope>
    <scope>ACTIVITY REGULATION</scope>
    <scope>CATALYTIC ACTIVITY</scope>
</reference>
<evidence type="ECO:0000250" key="1">
    <source>
        <dbReference type="UniProtKB" id="P47727"/>
    </source>
</evidence>
<evidence type="ECO:0000250" key="2">
    <source>
        <dbReference type="UniProtKB" id="P48758"/>
    </source>
</evidence>
<evidence type="ECO:0000250" key="3">
    <source>
        <dbReference type="UniProtKB" id="Q28960"/>
    </source>
</evidence>
<evidence type="ECO:0000269" key="4">
    <source>
    </source>
</evidence>
<evidence type="ECO:0000269" key="5">
    <source>
    </source>
</evidence>
<evidence type="ECO:0000269" key="6">
    <source>
    </source>
</evidence>
<evidence type="ECO:0000269" key="7">
    <source>
    </source>
</evidence>
<evidence type="ECO:0000269" key="8">
    <source>
    </source>
</evidence>
<evidence type="ECO:0000269" key="9">
    <source>
    </source>
</evidence>
<evidence type="ECO:0000269" key="10">
    <source>
    </source>
</evidence>
<evidence type="ECO:0000269" key="11">
    <source>
    </source>
</evidence>
<evidence type="ECO:0000269" key="12">
    <source>
    </source>
</evidence>
<evidence type="ECO:0000269" key="13">
    <source>
    </source>
</evidence>
<evidence type="ECO:0000269" key="14">
    <source ref="9"/>
</evidence>
<evidence type="ECO:0000303" key="15">
    <source>
    </source>
</evidence>
<evidence type="ECO:0000303" key="16">
    <source>
    </source>
</evidence>
<evidence type="ECO:0000305" key="17"/>
<evidence type="ECO:0000305" key="18">
    <source>
    </source>
</evidence>
<evidence type="ECO:0000305" key="19">
    <source>
    </source>
</evidence>
<evidence type="ECO:0000305" key="20">
    <source>
    </source>
</evidence>
<evidence type="ECO:0000305" key="21">
    <source>
    </source>
</evidence>
<evidence type="ECO:0000312" key="22">
    <source>
        <dbReference type="HGNC" id="HGNC:1548"/>
    </source>
</evidence>
<evidence type="ECO:0007744" key="23">
    <source>
    </source>
</evidence>
<evidence type="ECO:0007829" key="24">
    <source>
        <dbReference type="PDB" id="1WMA"/>
    </source>
</evidence>
<sequence>MSSGIHVALVTGGNKGIGLAIVRDLCRLFSGDVVLTARDVTRGQAAVQQLQAEGLSPRFHQLDIDDLQSIRALRDFLRKEYGGLDVLVNNAGIAFKVADPTPFHIQAEVTMKTNFFGTRDVCTELLPLIKPQGRVVNVSSIMSVRALKSCSPELQQKFRSETITEEELVGLMNKFVEDTKKGVHQKEGWPSSAYGVTKIGVTVLSRIHARKLSEQRKGDKILLNACCPGWVRTDMAGPKATKSPEEGAETPVYLALLPPDAEGPHGQFVSEKRVEQW</sequence>
<protein>
    <recommendedName>
        <fullName evidence="17">Carbonyl reductase [NADPH] 1</fullName>
        <ecNumber evidence="6 10 12">1.1.1.184</ecNumber>
    </recommendedName>
    <alternativeName>
        <fullName>15-hydroxyprostaglandin dehydrogenase [NADP(+)]</fullName>
        <ecNumber evidence="3">1.1.1.196</ecNumber>
        <ecNumber evidence="12">1.1.1.197</ecNumber>
    </alternativeName>
    <alternativeName>
        <fullName>20-beta-hydroxysteroid dehydrogenase</fullName>
    </alternativeName>
    <alternativeName>
        <fullName>Alcohol dehydrogenase [NAD(P)+] CBR1</fullName>
        <ecNumber evidence="12">1.1.1.71</ecNumber>
    </alternativeName>
    <alternativeName>
        <fullName>NADPH-dependent carbonyl reductase 1</fullName>
    </alternativeName>
    <alternativeName>
        <fullName evidence="16">Prostaglandin 9-ketoreductase</fullName>
        <shortName evidence="16">PG-9-KR</shortName>
    </alternativeName>
    <alternativeName>
        <fullName evidence="3">Prostaglandin-E(2) 9-reductase</fullName>
        <ecNumber evidence="6">1.1.1.189</ecNumber>
    </alternativeName>
    <alternativeName>
        <fullName>Short chain dehydrogenase/reductase family 21C member 1</fullName>
    </alternativeName>
</protein>
<gene>
    <name evidence="22" type="primary">CBR1</name>
    <name type="synonym">CBR</name>
    <name type="synonym">CRN</name>
    <name type="synonym">SDR21C1</name>
</gene>
<accession>P16152</accession>
<accession>B2RBZ7</accession>
<accession>B4DFK7</accession>
<accession>Q3LHW8</accession>
<feature type="initiator methionine" description="Removed" evidence="23">
    <location>
        <position position="1"/>
    </location>
</feature>
<feature type="chain" id="PRO_0000054602" description="Carbonyl reductase [NADPH] 1">
    <location>
        <begin position="2"/>
        <end position="277"/>
    </location>
</feature>
<feature type="active site" description="Proton acceptor">
    <location>
        <position position="194"/>
    </location>
</feature>
<feature type="binding site" evidence="4 7 9">
    <location>
        <begin position="10"/>
        <end position="34"/>
    </location>
    <ligand>
        <name>NADP(+)</name>
        <dbReference type="ChEBI" id="CHEBI:58349"/>
    </ligand>
</feature>
<feature type="binding site" evidence="4 7 9">
    <location>
        <begin position="63"/>
        <end position="64"/>
    </location>
    <ligand>
        <name>NADP(+)</name>
        <dbReference type="ChEBI" id="CHEBI:58349"/>
    </ligand>
</feature>
<feature type="binding site" evidence="4 7 9">
    <location>
        <position position="90"/>
    </location>
    <ligand>
        <name>NADP(+)</name>
        <dbReference type="ChEBI" id="CHEBI:58349"/>
    </ligand>
</feature>
<feature type="binding site">
    <location>
        <begin position="95"/>
        <end position="97"/>
    </location>
    <ligand>
        <name>glutathione</name>
        <dbReference type="ChEBI" id="CHEBI:57925"/>
    </ligand>
</feature>
<feature type="binding site">
    <location>
        <position position="106"/>
    </location>
    <ligand>
        <name>glutathione</name>
        <dbReference type="ChEBI" id="CHEBI:57925"/>
    </ligand>
</feature>
<feature type="binding site">
    <location>
        <position position="140"/>
    </location>
    <ligand>
        <name>substrate</name>
    </ligand>
</feature>
<feature type="binding site">
    <location>
        <begin position="193"/>
        <end position="194"/>
    </location>
    <ligand>
        <name>glutathione</name>
        <dbReference type="ChEBI" id="CHEBI:57925"/>
    </ligand>
</feature>
<feature type="binding site" evidence="4 7 9">
    <location>
        <begin position="194"/>
        <end position="198"/>
    </location>
    <ligand>
        <name>NADP(+)</name>
        <dbReference type="ChEBI" id="CHEBI:58349"/>
    </ligand>
</feature>
<feature type="binding site" evidence="4 7 9">
    <location>
        <begin position="231"/>
        <end position="233"/>
    </location>
    <ligand>
        <name>NADP(+)</name>
        <dbReference type="ChEBI" id="CHEBI:58349"/>
    </ligand>
</feature>
<feature type="modified residue" description="N-acetylserine" evidence="23">
    <location>
        <position position="2"/>
    </location>
</feature>
<feature type="modified residue" description="Phosphoserine" evidence="1">
    <location>
        <position position="2"/>
    </location>
</feature>
<feature type="modified residue" description="Phosphoserine" evidence="2">
    <location>
        <position position="30"/>
    </location>
</feature>
<feature type="modified residue" description="N6-1-carboxyethyl lysine" evidence="13">
    <location>
        <position position="239"/>
    </location>
</feature>
<feature type="splice variant" id="VSP_054796" description="In isoform 2." evidence="15">
    <original>GRVVNVSSIMSVRALKSCSPELQQKFRSETITEEELVGLMN</original>
    <variation>ASCVLSAWSCLSQNPSGGKSKPLAWFTEMSIICRCLTLGPF</variation>
    <location>
        <begin position="133"/>
        <end position="173"/>
    </location>
</feature>
<feature type="splice variant" id="VSP_054797" description="In isoform 2." evidence="15">
    <location>
        <begin position="174"/>
        <end position="277"/>
    </location>
</feature>
<feature type="sequence variant" id="VAR_059053" description="Reduced affinity for NADPH and reduced activity towards daunorubicin and prostaglandin E2; dbSNP:rs1143663." evidence="6 8">
    <original>V</original>
    <variation>I</variation>
    <location>
        <position position="88"/>
    </location>
</feature>
<feature type="sequence variant" id="VAR_031706" description="In dbSNP:rs41557318." evidence="14">
    <original>P</original>
    <variation>S</variation>
    <location>
        <position position="131"/>
    </location>
</feature>
<feature type="strand" evidence="24">
    <location>
        <begin position="7"/>
        <end position="12"/>
    </location>
</feature>
<feature type="helix" evidence="24">
    <location>
        <begin position="16"/>
        <end position="28"/>
    </location>
</feature>
<feature type="strand" evidence="24">
    <location>
        <begin position="29"/>
        <end position="39"/>
    </location>
</feature>
<feature type="helix" evidence="24">
    <location>
        <begin position="40"/>
        <end position="52"/>
    </location>
</feature>
<feature type="strand" evidence="24">
    <location>
        <begin position="58"/>
        <end position="61"/>
    </location>
</feature>
<feature type="helix" evidence="24">
    <location>
        <begin position="67"/>
        <end position="81"/>
    </location>
</feature>
<feature type="strand" evidence="24">
    <location>
        <begin position="82"/>
        <end position="89"/>
    </location>
</feature>
<feature type="helix" evidence="24">
    <location>
        <begin position="103"/>
        <end position="114"/>
    </location>
</feature>
<feature type="helix" evidence="24">
    <location>
        <begin position="116"/>
        <end position="125"/>
    </location>
</feature>
<feature type="helix" evidence="24">
    <location>
        <begin position="126"/>
        <end position="128"/>
    </location>
</feature>
<feature type="strand" evidence="24">
    <location>
        <begin position="129"/>
        <end position="138"/>
    </location>
</feature>
<feature type="helix" evidence="24">
    <location>
        <begin position="141"/>
        <end position="148"/>
    </location>
</feature>
<feature type="helix" evidence="24">
    <location>
        <begin position="152"/>
        <end position="159"/>
    </location>
</feature>
<feature type="helix" evidence="24">
    <location>
        <begin position="165"/>
        <end position="180"/>
    </location>
</feature>
<feature type="turn" evidence="24">
    <location>
        <begin position="184"/>
        <end position="188"/>
    </location>
</feature>
<feature type="helix" evidence="24">
    <location>
        <begin position="193"/>
        <end position="215"/>
    </location>
</feature>
<feature type="strand" evidence="24">
    <location>
        <begin position="222"/>
        <end position="227"/>
    </location>
</feature>
<feature type="turn" evidence="24">
    <location>
        <begin position="234"/>
        <end position="236"/>
    </location>
</feature>
<feature type="helix" evidence="24">
    <location>
        <begin position="244"/>
        <end position="247"/>
    </location>
</feature>
<feature type="helix" evidence="24">
    <location>
        <begin position="249"/>
        <end position="255"/>
    </location>
</feature>
<feature type="strand" evidence="24">
    <location>
        <begin position="268"/>
        <end position="270"/>
    </location>
</feature>
<feature type="strand" evidence="24">
    <location>
        <begin position="273"/>
        <end position="275"/>
    </location>
</feature>